<dbReference type="EC" id="3.1.26.3" evidence="1"/>
<dbReference type="EMBL" id="AE017126">
    <property type="protein sequence ID" value="AAQ00806.1"/>
    <property type="molecule type" value="Genomic_DNA"/>
</dbReference>
<dbReference type="RefSeq" id="NP_876153.1">
    <property type="nucleotide sequence ID" value="NC_005042.1"/>
</dbReference>
<dbReference type="RefSeq" id="WP_011125911.1">
    <property type="nucleotide sequence ID" value="NC_005042.1"/>
</dbReference>
<dbReference type="SMR" id="G3XCR8"/>
<dbReference type="STRING" id="167539.Pro_1762"/>
<dbReference type="EnsemblBacteria" id="AAQ00806">
    <property type="protein sequence ID" value="AAQ00806"/>
    <property type="gene ID" value="Pro_1762"/>
</dbReference>
<dbReference type="KEGG" id="pma:Pro_1762"/>
<dbReference type="PATRIC" id="fig|167539.5.peg.1861"/>
<dbReference type="eggNOG" id="COG0571">
    <property type="taxonomic scope" value="Bacteria"/>
</dbReference>
<dbReference type="HOGENOM" id="CLU_000907_1_3_3"/>
<dbReference type="OrthoDB" id="9805026at2"/>
<dbReference type="Proteomes" id="UP000001420">
    <property type="component" value="Chromosome"/>
</dbReference>
<dbReference type="GO" id="GO:0005737">
    <property type="term" value="C:cytoplasm"/>
    <property type="evidence" value="ECO:0007669"/>
    <property type="project" value="UniProtKB-SubCell"/>
</dbReference>
<dbReference type="GO" id="GO:0003725">
    <property type="term" value="F:double-stranded RNA binding"/>
    <property type="evidence" value="ECO:0007669"/>
    <property type="project" value="TreeGrafter"/>
</dbReference>
<dbReference type="GO" id="GO:0046872">
    <property type="term" value="F:metal ion binding"/>
    <property type="evidence" value="ECO:0007669"/>
    <property type="project" value="UniProtKB-KW"/>
</dbReference>
<dbReference type="GO" id="GO:0004525">
    <property type="term" value="F:ribonuclease III activity"/>
    <property type="evidence" value="ECO:0007669"/>
    <property type="project" value="UniProtKB-UniRule"/>
</dbReference>
<dbReference type="GO" id="GO:0019843">
    <property type="term" value="F:rRNA binding"/>
    <property type="evidence" value="ECO:0007669"/>
    <property type="project" value="UniProtKB-KW"/>
</dbReference>
<dbReference type="GO" id="GO:0006397">
    <property type="term" value="P:mRNA processing"/>
    <property type="evidence" value="ECO:0007669"/>
    <property type="project" value="UniProtKB-UniRule"/>
</dbReference>
<dbReference type="GO" id="GO:0010468">
    <property type="term" value="P:regulation of gene expression"/>
    <property type="evidence" value="ECO:0007669"/>
    <property type="project" value="TreeGrafter"/>
</dbReference>
<dbReference type="GO" id="GO:0006364">
    <property type="term" value="P:rRNA processing"/>
    <property type="evidence" value="ECO:0007669"/>
    <property type="project" value="UniProtKB-UniRule"/>
</dbReference>
<dbReference type="GO" id="GO:0008033">
    <property type="term" value="P:tRNA processing"/>
    <property type="evidence" value="ECO:0007669"/>
    <property type="project" value="UniProtKB-KW"/>
</dbReference>
<dbReference type="CDD" id="cd10845">
    <property type="entry name" value="DSRM_RNAse_III_family"/>
    <property type="match status" value="1"/>
</dbReference>
<dbReference type="CDD" id="cd00593">
    <property type="entry name" value="RIBOc"/>
    <property type="match status" value="1"/>
</dbReference>
<dbReference type="Gene3D" id="3.30.160.20">
    <property type="match status" value="1"/>
</dbReference>
<dbReference type="Gene3D" id="1.10.1520.10">
    <property type="entry name" value="Ribonuclease III domain"/>
    <property type="match status" value="1"/>
</dbReference>
<dbReference type="HAMAP" id="MF_00104">
    <property type="entry name" value="RNase_III"/>
    <property type="match status" value="1"/>
</dbReference>
<dbReference type="InterPro" id="IPR014720">
    <property type="entry name" value="dsRBD_dom"/>
</dbReference>
<dbReference type="InterPro" id="IPR011907">
    <property type="entry name" value="RNase_III"/>
</dbReference>
<dbReference type="InterPro" id="IPR000999">
    <property type="entry name" value="RNase_III_dom"/>
</dbReference>
<dbReference type="InterPro" id="IPR036389">
    <property type="entry name" value="RNase_III_sf"/>
</dbReference>
<dbReference type="NCBIfam" id="TIGR02191">
    <property type="entry name" value="RNaseIII"/>
    <property type="match status" value="1"/>
</dbReference>
<dbReference type="PANTHER" id="PTHR11207:SF0">
    <property type="entry name" value="RIBONUCLEASE 3"/>
    <property type="match status" value="1"/>
</dbReference>
<dbReference type="PANTHER" id="PTHR11207">
    <property type="entry name" value="RIBONUCLEASE III"/>
    <property type="match status" value="1"/>
</dbReference>
<dbReference type="Pfam" id="PF00035">
    <property type="entry name" value="dsrm"/>
    <property type="match status" value="1"/>
</dbReference>
<dbReference type="Pfam" id="PF14622">
    <property type="entry name" value="Ribonucleas_3_3"/>
    <property type="match status" value="1"/>
</dbReference>
<dbReference type="SMART" id="SM00358">
    <property type="entry name" value="DSRM"/>
    <property type="match status" value="1"/>
</dbReference>
<dbReference type="SMART" id="SM00535">
    <property type="entry name" value="RIBOc"/>
    <property type="match status" value="1"/>
</dbReference>
<dbReference type="SUPFAM" id="SSF54768">
    <property type="entry name" value="dsRNA-binding domain-like"/>
    <property type="match status" value="1"/>
</dbReference>
<dbReference type="SUPFAM" id="SSF69065">
    <property type="entry name" value="RNase III domain-like"/>
    <property type="match status" value="1"/>
</dbReference>
<dbReference type="PROSITE" id="PS50137">
    <property type="entry name" value="DS_RBD"/>
    <property type="match status" value="1"/>
</dbReference>
<dbReference type="PROSITE" id="PS50142">
    <property type="entry name" value="RNASE_3_2"/>
    <property type="match status" value="1"/>
</dbReference>
<name>RNC_PROMA</name>
<comment type="function">
    <text evidence="1">Digests double-stranded RNA. Involved in the processing of primary rRNA transcript to yield the immediate precursors to the large and small rRNAs (23S and 16S). Processes some mRNAs, and tRNAs when they are encoded in the rRNA operon. Processes pre-crRNA and tracrRNA of type II CRISPR loci if present in the organism.</text>
</comment>
<comment type="catalytic activity">
    <reaction evidence="1">
        <text>Endonucleolytic cleavage to 5'-phosphomonoester.</text>
        <dbReference type="EC" id="3.1.26.3"/>
    </reaction>
</comment>
<comment type="cofactor">
    <cofactor evidence="1">
        <name>Mg(2+)</name>
        <dbReference type="ChEBI" id="CHEBI:18420"/>
    </cofactor>
</comment>
<comment type="subunit">
    <text evidence="1">Homodimer.</text>
</comment>
<comment type="subcellular location">
    <subcellularLocation>
        <location evidence="1">Cytoplasm</location>
    </subcellularLocation>
</comment>
<comment type="similarity">
    <text evidence="1">Belongs to the ribonuclease III family.</text>
</comment>
<accession>G3XCR8</accession>
<organism>
    <name type="scientific">Prochlorococcus marinus (strain SARG / CCMP1375 / SS120)</name>
    <dbReference type="NCBI Taxonomy" id="167539"/>
    <lineage>
        <taxon>Bacteria</taxon>
        <taxon>Bacillati</taxon>
        <taxon>Cyanobacteriota</taxon>
        <taxon>Cyanophyceae</taxon>
        <taxon>Synechococcales</taxon>
        <taxon>Prochlorococcaceae</taxon>
        <taxon>Prochlorococcus</taxon>
    </lineage>
</organism>
<protein>
    <recommendedName>
        <fullName evidence="1">Ribonuclease 3</fullName>
        <ecNumber evidence="1">3.1.26.3</ecNumber>
    </recommendedName>
    <alternativeName>
        <fullName evidence="1">Ribonuclease III</fullName>
        <shortName evidence="1">RNase III</shortName>
    </alternativeName>
</protein>
<proteinExistence type="inferred from homology"/>
<feature type="chain" id="PRO_0000416612" description="Ribonuclease 3">
    <location>
        <begin position="1"/>
        <end position="249"/>
    </location>
</feature>
<feature type="domain" description="RNase III" evidence="1">
    <location>
        <begin position="29"/>
        <end position="151"/>
    </location>
</feature>
<feature type="domain" description="DRBM" evidence="1">
    <location>
        <begin position="179"/>
        <end position="249"/>
    </location>
</feature>
<feature type="region of interest" description="Disordered" evidence="2">
    <location>
        <begin position="227"/>
        <end position="249"/>
    </location>
</feature>
<feature type="compositionally biased region" description="Basic and acidic residues" evidence="2">
    <location>
        <begin position="236"/>
        <end position="249"/>
    </location>
</feature>
<feature type="active site" evidence="1">
    <location>
        <position position="69"/>
    </location>
</feature>
<feature type="active site" evidence="1">
    <location>
        <position position="140"/>
    </location>
</feature>
<feature type="binding site" evidence="1">
    <location>
        <position position="65"/>
    </location>
    <ligand>
        <name>Mg(2+)</name>
        <dbReference type="ChEBI" id="CHEBI:18420"/>
    </ligand>
</feature>
<feature type="binding site" evidence="1">
    <location>
        <position position="137"/>
    </location>
    <ligand>
        <name>Mg(2+)</name>
        <dbReference type="ChEBI" id="CHEBI:18420"/>
    </ligand>
</feature>
<feature type="binding site" evidence="1">
    <location>
        <position position="140"/>
    </location>
    <ligand>
        <name>Mg(2+)</name>
        <dbReference type="ChEBI" id="CHEBI:18420"/>
    </ligand>
</feature>
<reference key="1">
    <citation type="journal article" date="2003" name="Proc. Natl. Acad. Sci. U.S.A.">
        <title>Genome sequence of the cyanobacterium Prochlorococcus marinus SS120, a nearly minimal oxyphototrophic genome.</title>
        <authorList>
            <person name="Dufresne A."/>
            <person name="Salanoubat M."/>
            <person name="Partensky F."/>
            <person name="Artiguenave F."/>
            <person name="Axmann I.M."/>
            <person name="Barbe V."/>
            <person name="Duprat S."/>
            <person name="Galperin M.Y."/>
            <person name="Koonin E.V."/>
            <person name="Le Gall F."/>
            <person name="Makarova K.S."/>
            <person name="Ostrowski M."/>
            <person name="Oztas S."/>
            <person name="Robert C."/>
            <person name="Rogozin I.B."/>
            <person name="Scanlan D.J."/>
            <person name="Tandeau de Marsac N."/>
            <person name="Weissenbach J."/>
            <person name="Wincker P."/>
            <person name="Wolf Y.I."/>
            <person name="Hess W.R."/>
        </authorList>
    </citation>
    <scope>NUCLEOTIDE SEQUENCE [LARGE SCALE GENOMIC DNA]</scope>
    <source>
        <strain>SARG / CCMP1375 / SS120</strain>
    </source>
</reference>
<sequence>MTKKDIVSIVSKERAEEIYGLLTQSNLHSSDIEVIKKNEDYCLKILNEALTHTSFNLSINHERLEFQGDAVLRLAASEYIQSHFPKLSVGDRSALRAQLVSDRWLAKVGYKIGIKTTMLIANKALKDEAATDTICAEGTEALIGALYECLRNIDAIQNWLEPYWNIESEEVLADPHKQNEKSALQEWSQGQGLNKPIYTIKEISKQHGDLKRFYCTVHIQNDFRGEGWGSSRKKAQKEAAKEALKKLTN</sequence>
<evidence type="ECO:0000255" key="1">
    <source>
        <dbReference type="HAMAP-Rule" id="MF_00104"/>
    </source>
</evidence>
<evidence type="ECO:0000256" key="2">
    <source>
        <dbReference type="SAM" id="MobiDB-lite"/>
    </source>
</evidence>
<keyword id="KW-0963">Cytoplasm</keyword>
<keyword id="KW-0255">Endonuclease</keyword>
<keyword id="KW-0378">Hydrolase</keyword>
<keyword id="KW-0460">Magnesium</keyword>
<keyword id="KW-0479">Metal-binding</keyword>
<keyword id="KW-0507">mRNA processing</keyword>
<keyword id="KW-0540">Nuclease</keyword>
<keyword id="KW-1185">Reference proteome</keyword>
<keyword id="KW-0694">RNA-binding</keyword>
<keyword id="KW-0698">rRNA processing</keyword>
<keyword id="KW-0699">rRNA-binding</keyword>
<keyword id="KW-0819">tRNA processing</keyword>
<gene>
    <name evidence="1" type="primary">rnc</name>
    <name type="ordered locus">Pro_1762</name>
</gene>